<proteinExistence type="inferred from homology"/>
<protein>
    <recommendedName>
        <fullName evidence="1">Ribosomal RNA small subunit methyltransferase H</fullName>
        <ecNumber evidence="1">2.1.1.199</ecNumber>
    </recommendedName>
    <alternativeName>
        <fullName evidence="1">16S rRNA m(4)C1402 methyltransferase</fullName>
    </alternativeName>
    <alternativeName>
        <fullName evidence="1">rRNA (cytosine-N(4)-)-methyltransferase RsmH</fullName>
    </alternativeName>
</protein>
<accession>A8H992</accession>
<dbReference type="EC" id="2.1.1.199" evidence="1"/>
<dbReference type="EMBL" id="CP000851">
    <property type="protein sequence ID" value="ABV89129.1"/>
    <property type="molecule type" value="Genomic_DNA"/>
</dbReference>
<dbReference type="RefSeq" id="WP_012157011.1">
    <property type="nucleotide sequence ID" value="NC_009901.1"/>
</dbReference>
<dbReference type="SMR" id="A8H992"/>
<dbReference type="STRING" id="398579.Spea_3819"/>
<dbReference type="KEGG" id="spl:Spea_3819"/>
<dbReference type="eggNOG" id="COG0275">
    <property type="taxonomic scope" value="Bacteria"/>
</dbReference>
<dbReference type="HOGENOM" id="CLU_038422_2_0_6"/>
<dbReference type="OrthoDB" id="9806637at2"/>
<dbReference type="Proteomes" id="UP000002608">
    <property type="component" value="Chromosome"/>
</dbReference>
<dbReference type="GO" id="GO:0005737">
    <property type="term" value="C:cytoplasm"/>
    <property type="evidence" value="ECO:0007669"/>
    <property type="project" value="UniProtKB-SubCell"/>
</dbReference>
<dbReference type="GO" id="GO:0071424">
    <property type="term" value="F:rRNA (cytosine-N4-)-methyltransferase activity"/>
    <property type="evidence" value="ECO:0007669"/>
    <property type="project" value="UniProtKB-UniRule"/>
</dbReference>
<dbReference type="GO" id="GO:0070475">
    <property type="term" value="P:rRNA base methylation"/>
    <property type="evidence" value="ECO:0007669"/>
    <property type="project" value="UniProtKB-UniRule"/>
</dbReference>
<dbReference type="FunFam" id="1.10.150.170:FF:000001">
    <property type="entry name" value="Ribosomal RNA small subunit methyltransferase H"/>
    <property type="match status" value="1"/>
</dbReference>
<dbReference type="Gene3D" id="1.10.150.170">
    <property type="entry name" value="Putative methyltransferase TM0872, insert domain"/>
    <property type="match status" value="1"/>
</dbReference>
<dbReference type="Gene3D" id="3.40.50.150">
    <property type="entry name" value="Vaccinia Virus protein VP39"/>
    <property type="match status" value="1"/>
</dbReference>
<dbReference type="HAMAP" id="MF_01007">
    <property type="entry name" value="16SrRNA_methyltr_H"/>
    <property type="match status" value="1"/>
</dbReference>
<dbReference type="InterPro" id="IPR002903">
    <property type="entry name" value="RsmH"/>
</dbReference>
<dbReference type="InterPro" id="IPR023397">
    <property type="entry name" value="SAM-dep_MeTrfase_MraW_recog"/>
</dbReference>
<dbReference type="InterPro" id="IPR029063">
    <property type="entry name" value="SAM-dependent_MTases_sf"/>
</dbReference>
<dbReference type="NCBIfam" id="TIGR00006">
    <property type="entry name" value="16S rRNA (cytosine(1402)-N(4))-methyltransferase RsmH"/>
    <property type="match status" value="1"/>
</dbReference>
<dbReference type="PANTHER" id="PTHR11265:SF0">
    <property type="entry name" value="12S RRNA N4-METHYLCYTIDINE METHYLTRANSFERASE"/>
    <property type="match status" value="1"/>
</dbReference>
<dbReference type="PANTHER" id="PTHR11265">
    <property type="entry name" value="S-ADENOSYL-METHYLTRANSFERASE MRAW"/>
    <property type="match status" value="1"/>
</dbReference>
<dbReference type="Pfam" id="PF01795">
    <property type="entry name" value="Methyltransf_5"/>
    <property type="match status" value="1"/>
</dbReference>
<dbReference type="PIRSF" id="PIRSF004486">
    <property type="entry name" value="MraW"/>
    <property type="match status" value="1"/>
</dbReference>
<dbReference type="SUPFAM" id="SSF81799">
    <property type="entry name" value="Putative methyltransferase TM0872, insert domain"/>
    <property type="match status" value="1"/>
</dbReference>
<dbReference type="SUPFAM" id="SSF53335">
    <property type="entry name" value="S-adenosyl-L-methionine-dependent methyltransferases"/>
    <property type="match status" value="1"/>
</dbReference>
<reference key="1">
    <citation type="submission" date="2007-10" db="EMBL/GenBank/DDBJ databases">
        <title>Complete sequence of Shewanella pealeana ATCC 700345.</title>
        <authorList>
            <consortium name="US DOE Joint Genome Institute"/>
            <person name="Copeland A."/>
            <person name="Lucas S."/>
            <person name="Lapidus A."/>
            <person name="Barry K."/>
            <person name="Glavina del Rio T."/>
            <person name="Dalin E."/>
            <person name="Tice H."/>
            <person name="Pitluck S."/>
            <person name="Chertkov O."/>
            <person name="Brettin T."/>
            <person name="Bruce D."/>
            <person name="Detter J.C."/>
            <person name="Han C."/>
            <person name="Schmutz J."/>
            <person name="Larimer F."/>
            <person name="Land M."/>
            <person name="Hauser L."/>
            <person name="Kyrpides N."/>
            <person name="Kim E."/>
            <person name="Zhao J.-S.Z."/>
            <person name="Manno D."/>
            <person name="Hawari J."/>
            <person name="Richardson P."/>
        </authorList>
    </citation>
    <scope>NUCLEOTIDE SEQUENCE [LARGE SCALE GENOMIC DNA]</scope>
    <source>
        <strain>ATCC 700345 / ANG-SQ1</strain>
    </source>
</reference>
<gene>
    <name evidence="1" type="primary">rsmH</name>
    <name type="synonym">mraW</name>
    <name type="ordered locus">Spea_3819</name>
</gene>
<evidence type="ECO:0000255" key="1">
    <source>
        <dbReference type="HAMAP-Rule" id="MF_01007"/>
    </source>
</evidence>
<sequence>MTQEFEHLSVLLAETVAGLNIRPDGIYIDGTFGRGGHSRKVLEELGPNGRLIAIDRDPQAIAAAEQFKDDSRFQIVHGGFGQLADYVEDLGLKGQIDGVLLDFGVSSPQLDDAERGFSFLRDGPLDMRMDNSQGETAAQWLARAEIEDMAWVFKTYGEEKNSRHIARCIAADREKAPFLRTKDLADLIARITKNKERNKHPATRVFQAIRIYINSELEQIDQALEGALAVLAPEGRLSVISFHSLEDRMVKRFIRRNSQGESVPHGLPITEAEINKSRKLKAMGKAIKPSVEEVERNARARSSVLRIAERLPYEA</sequence>
<comment type="function">
    <text evidence="1">Specifically methylates the N4 position of cytidine in position 1402 (C1402) of 16S rRNA.</text>
</comment>
<comment type="catalytic activity">
    <reaction evidence="1">
        <text>cytidine(1402) in 16S rRNA + S-adenosyl-L-methionine = N(4)-methylcytidine(1402) in 16S rRNA + S-adenosyl-L-homocysteine + H(+)</text>
        <dbReference type="Rhea" id="RHEA:42928"/>
        <dbReference type="Rhea" id="RHEA-COMP:10286"/>
        <dbReference type="Rhea" id="RHEA-COMP:10287"/>
        <dbReference type="ChEBI" id="CHEBI:15378"/>
        <dbReference type="ChEBI" id="CHEBI:57856"/>
        <dbReference type="ChEBI" id="CHEBI:59789"/>
        <dbReference type="ChEBI" id="CHEBI:74506"/>
        <dbReference type="ChEBI" id="CHEBI:82748"/>
        <dbReference type="EC" id="2.1.1.199"/>
    </reaction>
</comment>
<comment type="subcellular location">
    <subcellularLocation>
        <location evidence="1">Cytoplasm</location>
    </subcellularLocation>
</comment>
<comment type="similarity">
    <text evidence="1">Belongs to the methyltransferase superfamily. RsmH family.</text>
</comment>
<keyword id="KW-0963">Cytoplasm</keyword>
<keyword id="KW-0489">Methyltransferase</keyword>
<keyword id="KW-1185">Reference proteome</keyword>
<keyword id="KW-0698">rRNA processing</keyword>
<keyword id="KW-0949">S-adenosyl-L-methionine</keyword>
<keyword id="KW-0808">Transferase</keyword>
<feature type="chain" id="PRO_0000387118" description="Ribosomal RNA small subunit methyltransferase H">
    <location>
        <begin position="1"/>
        <end position="315"/>
    </location>
</feature>
<feature type="binding site" evidence="1">
    <location>
        <begin position="35"/>
        <end position="37"/>
    </location>
    <ligand>
        <name>S-adenosyl-L-methionine</name>
        <dbReference type="ChEBI" id="CHEBI:59789"/>
    </ligand>
</feature>
<feature type="binding site" evidence="1">
    <location>
        <position position="55"/>
    </location>
    <ligand>
        <name>S-adenosyl-L-methionine</name>
        <dbReference type="ChEBI" id="CHEBI:59789"/>
    </ligand>
</feature>
<feature type="binding site" evidence="1">
    <location>
        <position position="80"/>
    </location>
    <ligand>
        <name>S-adenosyl-L-methionine</name>
        <dbReference type="ChEBI" id="CHEBI:59789"/>
    </ligand>
</feature>
<feature type="binding site" evidence="1">
    <location>
        <position position="102"/>
    </location>
    <ligand>
        <name>S-adenosyl-L-methionine</name>
        <dbReference type="ChEBI" id="CHEBI:59789"/>
    </ligand>
</feature>
<feature type="binding site" evidence="1">
    <location>
        <position position="109"/>
    </location>
    <ligand>
        <name>S-adenosyl-L-methionine</name>
        <dbReference type="ChEBI" id="CHEBI:59789"/>
    </ligand>
</feature>
<organism>
    <name type="scientific">Shewanella pealeana (strain ATCC 700345 / ANG-SQ1)</name>
    <dbReference type="NCBI Taxonomy" id="398579"/>
    <lineage>
        <taxon>Bacteria</taxon>
        <taxon>Pseudomonadati</taxon>
        <taxon>Pseudomonadota</taxon>
        <taxon>Gammaproteobacteria</taxon>
        <taxon>Alteromonadales</taxon>
        <taxon>Shewanellaceae</taxon>
        <taxon>Shewanella</taxon>
    </lineage>
</organism>
<name>RSMH_SHEPA</name>